<gene>
    <name evidence="1" type="primary">ispD</name>
    <name type="ordered locus">ECP_2729</name>
</gene>
<name>ISPD_ECOL5</name>
<protein>
    <recommendedName>
        <fullName evidence="1">2-C-methyl-D-erythritol 4-phosphate cytidylyltransferase</fullName>
        <ecNumber evidence="1">2.7.7.60</ecNumber>
    </recommendedName>
    <alternativeName>
        <fullName evidence="1">4-diphosphocytidyl-2C-methyl-D-erythritol synthase</fullName>
    </alternativeName>
    <alternativeName>
        <fullName evidence="1">MEP cytidylyltransferase</fullName>
        <shortName evidence="1">MCT</shortName>
    </alternativeName>
</protein>
<feature type="chain" id="PRO_1000022923" description="2-C-methyl-D-erythritol 4-phosphate cytidylyltransferase">
    <location>
        <begin position="1"/>
        <end position="236"/>
    </location>
</feature>
<feature type="site" description="Transition state stabilizer" evidence="1">
    <location>
        <position position="20"/>
    </location>
</feature>
<feature type="site" description="Transition state stabilizer" evidence="1">
    <location>
        <position position="27"/>
    </location>
</feature>
<feature type="site" description="Positions MEP for the nucleophilic attack" evidence="1">
    <location>
        <position position="157"/>
    </location>
</feature>
<feature type="site" description="Positions MEP for the nucleophilic attack" evidence="1">
    <location>
        <position position="213"/>
    </location>
</feature>
<sequence>MATTHLDVCAVVPAAGFGRRMQTECPKQYLSIGNQTILEHSVHALLAHPRVKRVVIAISPGDSRFAQLPLANHPRITVVDGGEERADSVLAGLKAAGDAQWVLVHDAARPCLHQDDLARLLALSETSRTGGILAAPVRDTMKRAEPGKNAIAHTVDRNGLWHALTPQFFPRELLHDCLTRALNEGATITDEASALEYCGFHPQLVEGRADNIKVTRPEDLALAEFYLTRTIHQENT</sequence>
<comment type="function">
    <text evidence="1">Catalyzes the formation of 4-diphosphocytidyl-2-C-methyl-D-erythritol from CTP and 2-C-methyl-D-erythritol 4-phosphate (MEP).</text>
</comment>
<comment type="catalytic activity">
    <reaction evidence="1">
        <text>2-C-methyl-D-erythritol 4-phosphate + CTP + H(+) = 4-CDP-2-C-methyl-D-erythritol + diphosphate</text>
        <dbReference type="Rhea" id="RHEA:13429"/>
        <dbReference type="ChEBI" id="CHEBI:15378"/>
        <dbReference type="ChEBI" id="CHEBI:33019"/>
        <dbReference type="ChEBI" id="CHEBI:37563"/>
        <dbReference type="ChEBI" id="CHEBI:57823"/>
        <dbReference type="ChEBI" id="CHEBI:58262"/>
        <dbReference type="EC" id="2.7.7.60"/>
    </reaction>
</comment>
<comment type="pathway">
    <text evidence="1">Isoprenoid biosynthesis; isopentenyl diphosphate biosynthesis via DXP pathway; isopentenyl diphosphate from 1-deoxy-D-xylulose 5-phosphate: step 2/6.</text>
</comment>
<comment type="subunit">
    <text evidence="1">Homodimer.</text>
</comment>
<comment type="similarity">
    <text evidence="1">Belongs to the IspD/TarI cytidylyltransferase family. IspD subfamily.</text>
</comment>
<proteinExistence type="inferred from homology"/>
<evidence type="ECO:0000255" key="1">
    <source>
        <dbReference type="HAMAP-Rule" id="MF_00108"/>
    </source>
</evidence>
<reference key="1">
    <citation type="journal article" date="2006" name="Mol. Microbiol.">
        <title>Role of pathogenicity island-associated integrases in the genome plasticity of uropathogenic Escherichia coli strain 536.</title>
        <authorList>
            <person name="Hochhut B."/>
            <person name="Wilde C."/>
            <person name="Balling G."/>
            <person name="Middendorf B."/>
            <person name="Dobrindt U."/>
            <person name="Brzuszkiewicz E."/>
            <person name="Gottschalk G."/>
            <person name="Carniel E."/>
            <person name="Hacker J."/>
        </authorList>
    </citation>
    <scope>NUCLEOTIDE SEQUENCE [LARGE SCALE GENOMIC DNA]</scope>
    <source>
        <strain>536 / UPEC</strain>
    </source>
</reference>
<keyword id="KW-0414">Isoprene biosynthesis</keyword>
<keyword id="KW-0548">Nucleotidyltransferase</keyword>
<keyword id="KW-0808">Transferase</keyword>
<organism>
    <name type="scientific">Escherichia coli O6:K15:H31 (strain 536 / UPEC)</name>
    <dbReference type="NCBI Taxonomy" id="362663"/>
    <lineage>
        <taxon>Bacteria</taxon>
        <taxon>Pseudomonadati</taxon>
        <taxon>Pseudomonadota</taxon>
        <taxon>Gammaproteobacteria</taxon>
        <taxon>Enterobacterales</taxon>
        <taxon>Enterobacteriaceae</taxon>
        <taxon>Escherichia</taxon>
    </lineage>
</organism>
<dbReference type="EC" id="2.7.7.60" evidence="1"/>
<dbReference type="EMBL" id="CP000247">
    <property type="protein sequence ID" value="ABG70718.1"/>
    <property type="molecule type" value="Genomic_DNA"/>
</dbReference>
<dbReference type="RefSeq" id="WP_000246149.1">
    <property type="nucleotide sequence ID" value="NC_008253.1"/>
</dbReference>
<dbReference type="SMR" id="Q0TEB1"/>
<dbReference type="KEGG" id="ecp:ECP_2729"/>
<dbReference type="HOGENOM" id="CLU_061281_3_1_6"/>
<dbReference type="UniPathway" id="UPA00056">
    <property type="reaction ID" value="UER00093"/>
</dbReference>
<dbReference type="Proteomes" id="UP000009182">
    <property type="component" value="Chromosome"/>
</dbReference>
<dbReference type="GO" id="GO:0050518">
    <property type="term" value="F:2-C-methyl-D-erythritol 4-phosphate cytidylyltransferase activity"/>
    <property type="evidence" value="ECO:0007669"/>
    <property type="project" value="UniProtKB-UniRule"/>
</dbReference>
<dbReference type="GO" id="GO:0019288">
    <property type="term" value="P:isopentenyl diphosphate biosynthetic process, methylerythritol 4-phosphate pathway"/>
    <property type="evidence" value="ECO:0007669"/>
    <property type="project" value="UniProtKB-UniRule"/>
</dbReference>
<dbReference type="CDD" id="cd02516">
    <property type="entry name" value="CDP-ME_synthetase"/>
    <property type="match status" value="1"/>
</dbReference>
<dbReference type="FunFam" id="3.90.550.10:FF:000003">
    <property type="entry name" value="2-C-methyl-D-erythritol 4-phosphate cytidylyltransferase"/>
    <property type="match status" value="1"/>
</dbReference>
<dbReference type="Gene3D" id="3.90.550.10">
    <property type="entry name" value="Spore Coat Polysaccharide Biosynthesis Protein SpsA, Chain A"/>
    <property type="match status" value="1"/>
</dbReference>
<dbReference type="HAMAP" id="MF_00108">
    <property type="entry name" value="IspD"/>
    <property type="match status" value="1"/>
</dbReference>
<dbReference type="InterPro" id="IPR001228">
    <property type="entry name" value="IspD"/>
</dbReference>
<dbReference type="InterPro" id="IPR034683">
    <property type="entry name" value="IspD/TarI"/>
</dbReference>
<dbReference type="InterPro" id="IPR050088">
    <property type="entry name" value="IspD/TarI_cytidylyltransf_bact"/>
</dbReference>
<dbReference type="InterPro" id="IPR018294">
    <property type="entry name" value="ISPD_synthase_CS"/>
</dbReference>
<dbReference type="InterPro" id="IPR029044">
    <property type="entry name" value="Nucleotide-diphossugar_trans"/>
</dbReference>
<dbReference type="NCBIfam" id="TIGR00453">
    <property type="entry name" value="ispD"/>
    <property type="match status" value="1"/>
</dbReference>
<dbReference type="PANTHER" id="PTHR32125">
    <property type="entry name" value="2-C-METHYL-D-ERYTHRITOL 4-PHOSPHATE CYTIDYLYLTRANSFERASE, CHLOROPLASTIC"/>
    <property type="match status" value="1"/>
</dbReference>
<dbReference type="PANTHER" id="PTHR32125:SF4">
    <property type="entry name" value="2-C-METHYL-D-ERYTHRITOL 4-PHOSPHATE CYTIDYLYLTRANSFERASE, CHLOROPLASTIC"/>
    <property type="match status" value="1"/>
</dbReference>
<dbReference type="Pfam" id="PF01128">
    <property type="entry name" value="IspD"/>
    <property type="match status" value="1"/>
</dbReference>
<dbReference type="SUPFAM" id="SSF53448">
    <property type="entry name" value="Nucleotide-diphospho-sugar transferases"/>
    <property type="match status" value="1"/>
</dbReference>
<dbReference type="PROSITE" id="PS01295">
    <property type="entry name" value="ISPD"/>
    <property type="match status" value="1"/>
</dbReference>
<accession>Q0TEB1</accession>